<sequence length="385" mass="40449">MSVALAGNPASTSTQYEPLRVMIVDDSVVIRGLISRWIEAEPDMVVAASLRTGLDAVNQVERIKPDVAVLDIEMPELDGISALPKLLAKKRDLIIIMASTLTRRNAEISFKALSLGAADYIPKPESTREASAADIFKHDLLQKIRHLGGKVRRKASAASSTAAPALMREPAAPAHSVASQAALVKRPFGVTAPRVLLIGSSTGGPQALMSLVSEIGSVIDHYPVLITQHMPPTFTTILAEHLMRSARRPAHEGVDGEVVKSGQIYLAPGGRHMRVVRQGGQAVIALDDGPPVNFCKPAVDPLFNSAIDVWQSGILAVVLTGMGSDGMRGGKDIVAAGGSVIAQDEASSVVWGMPGAAANAGICAAVLPLNQIGPKLVRLFSGDRS</sequence>
<keyword id="KW-0145">Chemotaxis</keyword>
<keyword id="KW-0963">Cytoplasm</keyword>
<keyword id="KW-0378">Hydrolase</keyword>
<keyword id="KW-0597">Phosphoprotein</keyword>
<protein>
    <recommendedName>
        <fullName evidence="1">Protein-glutamate methylesterase/protein-glutamine glutaminase</fullName>
        <ecNumber evidence="1">3.1.1.61</ecNumber>
        <ecNumber evidence="1">3.5.1.44</ecNumber>
    </recommendedName>
</protein>
<dbReference type="EC" id="3.1.1.61" evidence="1"/>
<dbReference type="EC" id="3.5.1.44" evidence="1"/>
<dbReference type="EMBL" id="CP000283">
    <property type="protein sequence ID" value="ABE40897.1"/>
    <property type="molecule type" value="Genomic_DNA"/>
</dbReference>
<dbReference type="SMR" id="Q132U2"/>
<dbReference type="STRING" id="316057.RPD_3675"/>
<dbReference type="KEGG" id="rpd:RPD_3675"/>
<dbReference type="eggNOG" id="COG2201">
    <property type="taxonomic scope" value="Bacteria"/>
</dbReference>
<dbReference type="HOGENOM" id="CLU_000445_51_0_5"/>
<dbReference type="BioCyc" id="RPAL316057:RPD_RS18475-MONOMER"/>
<dbReference type="Proteomes" id="UP000001818">
    <property type="component" value="Chromosome"/>
</dbReference>
<dbReference type="GO" id="GO:0005737">
    <property type="term" value="C:cytoplasm"/>
    <property type="evidence" value="ECO:0007669"/>
    <property type="project" value="UniProtKB-SubCell"/>
</dbReference>
<dbReference type="GO" id="GO:0000156">
    <property type="term" value="F:phosphorelay response regulator activity"/>
    <property type="evidence" value="ECO:0007669"/>
    <property type="project" value="InterPro"/>
</dbReference>
<dbReference type="GO" id="GO:0008984">
    <property type="term" value="F:protein-glutamate methylesterase activity"/>
    <property type="evidence" value="ECO:0007669"/>
    <property type="project" value="UniProtKB-UniRule"/>
</dbReference>
<dbReference type="GO" id="GO:0050568">
    <property type="term" value="F:protein-glutamine glutaminase activity"/>
    <property type="evidence" value="ECO:0007669"/>
    <property type="project" value="UniProtKB-UniRule"/>
</dbReference>
<dbReference type="GO" id="GO:0006935">
    <property type="term" value="P:chemotaxis"/>
    <property type="evidence" value="ECO:0007669"/>
    <property type="project" value="UniProtKB-UniRule"/>
</dbReference>
<dbReference type="CDD" id="cd16432">
    <property type="entry name" value="CheB_Rec"/>
    <property type="match status" value="1"/>
</dbReference>
<dbReference type="CDD" id="cd17541">
    <property type="entry name" value="REC_CheB-like"/>
    <property type="match status" value="1"/>
</dbReference>
<dbReference type="Gene3D" id="3.40.50.2300">
    <property type="match status" value="1"/>
</dbReference>
<dbReference type="Gene3D" id="3.40.50.180">
    <property type="entry name" value="Methylesterase CheB, C-terminal domain"/>
    <property type="match status" value="1"/>
</dbReference>
<dbReference type="HAMAP" id="MF_00099">
    <property type="entry name" value="CheB_chemtxs"/>
    <property type="match status" value="1"/>
</dbReference>
<dbReference type="InterPro" id="IPR008248">
    <property type="entry name" value="CheB-like"/>
</dbReference>
<dbReference type="InterPro" id="IPR035909">
    <property type="entry name" value="CheB_C"/>
</dbReference>
<dbReference type="InterPro" id="IPR011006">
    <property type="entry name" value="CheY-like_superfamily"/>
</dbReference>
<dbReference type="InterPro" id="IPR000673">
    <property type="entry name" value="Sig_transdc_resp-reg_Me-estase"/>
</dbReference>
<dbReference type="InterPro" id="IPR001789">
    <property type="entry name" value="Sig_transdc_resp-reg_receiver"/>
</dbReference>
<dbReference type="NCBIfam" id="NF001965">
    <property type="entry name" value="PRK00742.1"/>
    <property type="match status" value="1"/>
</dbReference>
<dbReference type="PANTHER" id="PTHR42872">
    <property type="entry name" value="PROTEIN-GLUTAMATE METHYLESTERASE/PROTEIN-GLUTAMINE GLUTAMINASE"/>
    <property type="match status" value="1"/>
</dbReference>
<dbReference type="PANTHER" id="PTHR42872:SF3">
    <property type="entry name" value="PROTEIN-GLUTAMATE METHYLESTERASE_PROTEIN-GLUTAMINE GLUTAMINASE 1"/>
    <property type="match status" value="1"/>
</dbReference>
<dbReference type="Pfam" id="PF01339">
    <property type="entry name" value="CheB_methylest"/>
    <property type="match status" value="1"/>
</dbReference>
<dbReference type="Pfam" id="PF00072">
    <property type="entry name" value="Response_reg"/>
    <property type="match status" value="1"/>
</dbReference>
<dbReference type="PIRSF" id="PIRSF000876">
    <property type="entry name" value="RR_chemtxs_CheB"/>
    <property type="match status" value="1"/>
</dbReference>
<dbReference type="SMART" id="SM00448">
    <property type="entry name" value="REC"/>
    <property type="match status" value="1"/>
</dbReference>
<dbReference type="SUPFAM" id="SSF52172">
    <property type="entry name" value="CheY-like"/>
    <property type="match status" value="1"/>
</dbReference>
<dbReference type="SUPFAM" id="SSF52738">
    <property type="entry name" value="Methylesterase CheB, C-terminal domain"/>
    <property type="match status" value="1"/>
</dbReference>
<dbReference type="PROSITE" id="PS50122">
    <property type="entry name" value="CHEB"/>
    <property type="match status" value="1"/>
</dbReference>
<dbReference type="PROSITE" id="PS50110">
    <property type="entry name" value="RESPONSE_REGULATORY"/>
    <property type="match status" value="1"/>
</dbReference>
<gene>
    <name evidence="1" type="primary">cheB</name>
    <name type="ordered locus">RPD_3675</name>
</gene>
<comment type="function">
    <text evidence="1">Involved in chemotaxis. Part of a chemotaxis signal transduction system that modulates chemotaxis in response to various stimuli. Catalyzes the demethylation of specific methylglutamate residues introduced into the chemoreceptors (methyl-accepting chemotaxis proteins or MCP) by CheR. Also mediates the irreversible deamidation of specific glutamine residues to glutamic acid.</text>
</comment>
<comment type="catalytic activity">
    <reaction evidence="1">
        <text>[protein]-L-glutamate 5-O-methyl ester + H2O = L-glutamyl-[protein] + methanol + H(+)</text>
        <dbReference type="Rhea" id="RHEA:23236"/>
        <dbReference type="Rhea" id="RHEA-COMP:10208"/>
        <dbReference type="Rhea" id="RHEA-COMP:10311"/>
        <dbReference type="ChEBI" id="CHEBI:15377"/>
        <dbReference type="ChEBI" id="CHEBI:15378"/>
        <dbReference type="ChEBI" id="CHEBI:17790"/>
        <dbReference type="ChEBI" id="CHEBI:29973"/>
        <dbReference type="ChEBI" id="CHEBI:82795"/>
        <dbReference type="EC" id="3.1.1.61"/>
    </reaction>
</comment>
<comment type="catalytic activity">
    <reaction evidence="1">
        <text>L-glutaminyl-[protein] + H2O = L-glutamyl-[protein] + NH4(+)</text>
        <dbReference type="Rhea" id="RHEA:16441"/>
        <dbReference type="Rhea" id="RHEA-COMP:10207"/>
        <dbReference type="Rhea" id="RHEA-COMP:10208"/>
        <dbReference type="ChEBI" id="CHEBI:15377"/>
        <dbReference type="ChEBI" id="CHEBI:28938"/>
        <dbReference type="ChEBI" id="CHEBI:29973"/>
        <dbReference type="ChEBI" id="CHEBI:30011"/>
        <dbReference type="EC" id="3.5.1.44"/>
    </reaction>
</comment>
<comment type="subcellular location">
    <subcellularLocation>
        <location evidence="1">Cytoplasm</location>
    </subcellularLocation>
</comment>
<comment type="domain">
    <text evidence="1">Contains a C-terminal catalytic domain, and an N-terminal region which modulates catalytic activity.</text>
</comment>
<comment type="PTM">
    <text evidence="1">Phosphorylated by CheA. Phosphorylation of the N-terminal regulatory domain activates the methylesterase activity.</text>
</comment>
<comment type="similarity">
    <text evidence="1">Belongs to the CheB family.</text>
</comment>
<reference key="1">
    <citation type="submission" date="2006-03" db="EMBL/GenBank/DDBJ databases">
        <title>Complete sequence of Rhodopseudomonas palustris BisB5.</title>
        <authorList>
            <consortium name="US DOE Joint Genome Institute"/>
            <person name="Copeland A."/>
            <person name="Lucas S."/>
            <person name="Lapidus A."/>
            <person name="Barry K."/>
            <person name="Detter J.C."/>
            <person name="Glavina del Rio T."/>
            <person name="Hammon N."/>
            <person name="Israni S."/>
            <person name="Dalin E."/>
            <person name="Tice H."/>
            <person name="Pitluck S."/>
            <person name="Chain P."/>
            <person name="Malfatti S."/>
            <person name="Shin M."/>
            <person name="Vergez L."/>
            <person name="Schmutz J."/>
            <person name="Larimer F."/>
            <person name="Land M."/>
            <person name="Hauser L."/>
            <person name="Pelletier D.A."/>
            <person name="Kyrpides N."/>
            <person name="Lykidis A."/>
            <person name="Oda Y."/>
            <person name="Harwood C.S."/>
            <person name="Richardson P."/>
        </authorList>
    </citation>
    <scope>NUCLEOTIDE SEQUENCE [LARGE SCALE GENOMIC DNA]</scope>
    <source>
        <strain>BisB5</strain>
    </source>
</reference>
<accession>Q132U2</accession>
<feature type="chain" id="PRO_0000264309" description="Protein-glutamate methylesterase/protein-glutamine glutaminase">
    <location>
        <begin position="1"/>
        <end position="385"/>
    </location>
</feature>
<feature type="domain" description="Response regulatory" evidence="1">
    <location>
        <begin position="20"/>
        <end position="138"/>
    </location>
</feature>
<feature type="domain" description="CheB-type methylesterase" evidence="1">
    <location>
        <begin position="189"/>
        <end position="383"/>
    </location>
</feature>
<feature type="active site" evidence="1">
    <location>
        <position position="201"/>
    </location>
</feature>
<feature type="active site" evidence="1">
    <location>
        <position position="229"/>
    </location>
</feature>
<feature type="active site" evidence="1">
    <location>
        <position position="325"/>
    </location>
</feature>
<feature type="modified residue" description="4-aspartylphosphate" evidence="1">
    <location>
        <position position="71"/>
    </location>
</feature>
<proteinExistence type="inferred from homology"/>
<name>CHEB_RHOPS</name>
<evidence type="ECO:0000255" key="1">
    <source>
        <dbReference type="HAMAP-Rule" id="MF_00099"/>
    </source>
</evidence>
<organism>
    <name type="scientific">Rhodopseudomonas palustris (strain BisB5)</name>
    <dbReference type="NCBI Taxonomy" id="316057"/>
    <lineage>
        <taxon>Bacteria</taxon>
        <taxon>Pseudomonadati</taxon>
        <taxon>Pseudomonadota</taxon>
        <taxon>Alphaproteobacteria</taxon>
        <taxon>Hyphomicrobiales</taxon>
        <taxon>Nitrobacteraceae</taxon>
        <taxon>Rhodopseudomonas</taxon>
    </lineage>
</organism>